<comment type="function">
    <text evidence="1">Catalyzes the condensation of carbamoyl phosphate and aspartate to form carbamoyl aspartate and inorganic phosphate, the committed step in the de novo pyrimidine nucleotide biosynthesis pathway.</text>
</comment>
<comment type="catalytic activity">
    <reaction evidence="1">
        <text>carbamoyl phosphate + L-aspartate = N-carbamoyl-L-aspartate + phosphate + H(+)</text>
        <dbReference type="Rhea" id="RHEA:20013"/>
        <dbReference type="ChEBI" id="CHEBI:15378"/>
        <dbReference type="ChEBI" id="CHEBI:29991"/>
        <dbReference type="ChEBI" id="CHEBI:32814"/>
        <dbReference type="ChEBI" id="CHEBI:43474"/>
        <dbReference type="ChEBI" id="CHEBI:58228"/>
        <dbReference type="EC" id="2.1.3.2"/>
    </reaction>
</comment>
<comment type="pathway">
    <text evidence="1">Pyrimidine metabolism; UMP biosynthesis via de novo pathway; (S)-dihydroorotate from bicarbonate: step 2/3.</text>
</comment>
<comment type="subunit">
    <text evidence="1">Heterododecamer (2C3:3R2) of six catalytic PyrB chains organized as two trimers (C3), and six regulatory PyrI chains organized as three dimers (R2).</text>
</comment>
<comment type="similarity">
    <text evidence="1">Belongs to the aspartate/ornithine carbamoyltransferase superfamily. ATCase family.</text>
</comment>
<keyword id="KW-0665">Pyrimidine biosynthesis</keyword>
<keyword id="KW-0808">Transferase</keyword>
<evidence type="ECO:0000255" key="1">
    <source>
        <dbReference type="HAMAP-Rule" id="MF_00001"/>
    </source>
</evidence>
<protein>
    <recommendedName>
        <fullName evidence="1">Aspartate carbamoyltransferase catalytic subunit</fullName>
        <ecNumber evidence="1">2.1.3.2</ecNumber>
    </recommendedName>
    <alternativeName>
        <fullName evidence="1">Aspartate transcarbamylase</fullName>
        <shortName evidence="1">ATCase</shortName>
    </alternativeName>
</protein>
<accession>B0VLH2</accession>
<sequence length="338" mass="37194">MHIAALHQPSQVQLNQDGNLKHFLTIEGLSKENLTKILDTAQSFLDDNNNLINRPLLEGRTVMNLFFENSTRTRTTFEAAAKRLSANVLNIDIARSSTSKGETLRDTLWNLEAMAADIFVVRHSSSGAAHFIAKDVCPKVAIINAGDGRHAHPTQAMLDMLTIRREMKKPFEDLSVAIIGDIKHSRVARSDVAALQTLGCKDIRVIAPNTLLPVGFSEYGDHVRLFNNMDEGITGCDVIIALRIQNERIDSPALSSQSEFYRMYGLNKERLSLAKPDCIVMHPGPMNRGVEIDSSIADGEQSVILKQVTNGIAVRMAVLALSMQGQLQEQGLIDAIAL</sequence>
<proteinExistence type="inferred from homology"/>
<feature type="chain" id="PRO_1000088729" description="Aspartate carbamoyltransferase catalytic subunit">
    <location>
        <begin position="1"/>
        <end position="338"/>
    </location>
</feature>
<feature type="binding site" evidence="1">
    <location>
        <position position="72"/>
    </location>
    <ligand>
        <name>carbamoyl phosphate</name>
        <dbReference type="ChEBI" id="CHEBI:58228"/>
    </ligand>
</feature>
<feature type="binding site" evidence="1">
    <location>
        <position position="73"/>
    </location>
    <ligand>
        <name>carbamoyl phosphate</name>
        <dbReference type="ChEBI" id="CHEBI:58228"/>
    </ligand>
</feature>
<feature type="binding site" evidence="1">
    <location>
        <position position="100"/>
    </location>
    <ligand>
        <name>L-aspartate</name>
        <dbReference type="ChEBI" id="CHEBI:29991"/>
    </ligand>
</feature>
<feature type="binding site" evidence="1">
    <location>
        <position position="122"/>
    </location>
    <ligand>
        <name>carbamoyl phosphate</name>
        <dbReference type="ChEBI" id="CHEBI:58228"/>
    </ligand>
</feature>
<feature type="binding site" evidence="1">
    <location>
        <position position="152"/>
    </location>
    <ligand>
        <name>carbamoyl phosphate</name>
        <dbReference type="ChEBI" id="CHEBI:58228"/>
    </ligand>
</feature>
<feature type="binding site" evidence="1">
    <location>
        <position position="155"/>
    </location>
    <ligand>
        <name>carbamoyl phosphate</name>
        <dbReference type="ChEBI" id="CHEBI:58228"/>
    </ligand>
</feature>
<feature type="binding site" evidence="1">
    <location>
        <position position="186"/>
    </location>
    <ligand>
        <name>L-aspartate</name>
        <dbReference type="ChEBI" id="CHEBI:29991"/>
    </ligand>
</feature>
<feature type="binding site" evidence="1">
    <location>
        <position position="243"/>
    </location>
    <ligand>
        <name>L-aspartate</name>
        <dbReference type="ChEBI" id="CHEBI:29991"/>
    </ligand>
</feature>
<feature type="binding site" evidence="1">
    <location>
        <position position="284"/>
    </location>
    <ligand>
        <name>carbamoyl phosphate</name>
        <dbReference type="ChEBI" id="CHEBI:58228"/>
    </ligand>
</feature>
<feature type="binding site" evidence="1">
    <location>
        <position position="285"/>
    </location>
    <ligand>
        <name>carbamoyl phosphate</name>
        <dbReference type="ChEBI" id="CHEBI:58228"/>
    </ligand>
</feature>
<gene>
    <name evidence="1" type="primary">pyrB</name>
    <name type="ordered locus">ABSDF1477</name>
</gene>
<reference key="1">
    <citation type="journal article" date="2008" name="PLoS ONE">
        <title>Comparative analysis of Acinetobacters: three genomes for three lifestyles.</title>
        <authorList>
            <person name="Vallenet D."/>
            <person name="Nordmann P."/>
            <person name="Barbe V."/>
            <person name="Poirel L."/>
            <person name="Mangenot S."/>
            <person name="Bataille E."/>
            <person name="Dossat C."/>
            <person name="Gas S."/>
            <person name="Kreimeyer A."/>
            <person name="Lenoble P."/>
            <person name="Oztas S."/>
            <person name="Poulain J."/>
            <person name="Segurens B."/>
            <person name="Robert C."/>
            <person name="Abergel C."/>
            <person name="Claverie J.-M."/>
            <person name="Raoult D."/>
            <person name="Medigue C."/>
            <person name="Weissenbach J."/>
            <person name="Cruveiller S."/>
        </authorList>
    </citation>
    <scope>NUCLEOTIDE SEQUENCE [LARGE SCALE GENOMIC DNA]</scope>
    <source>
        <strain>SDF</strain>
    </source>
</reference>
<name>PYRB_ACIBS</name>
<dbReference type="EC" id="2.1.3.2" evidence="1"/>
<dbReference type="EMBL" id="CU468230">
    <property type="protein sequence ID" value="CAP00821.1"/>
    <property type="molecule type" value="Genomic_DNA"/>
</dbReference>
<dbReference type="SMR" id="B0VLH2"/>
<dbReference type="KEGG" id="abm:ABSDF1477"/>
<dbReference type="HOGENOM" id="CLU_043846_2_0_6"/>
<dbReference type="UniPathway" id="UPA00070">
    <property type="reaction ID" value="UER00116"/>
</dbReference>
<dbReference type="Proteomes" id="UP000001741">
    <property type="component" value="Chromosome"/>
</dbReference>
<dbReference type="GO" id="GO:0005829">
    <property type="term" value="C:cytosol"/>
    <property type="evidence" value="ECO:0007669"/>
    <property type="project" value="TreeGrafter"/>
</dbReference>
<dbReference type="GO" id="GO:0016597">
    <property type="term" value="F:amino acid binding"/>
    <property type="evidence" value="ECO:0007669"/>
    <property type="project" value="InterPro"/>
</dbReference>
<dbReference type="GO" id="GO:0004070">
    <property type="term" value="F:aspartate carbamoyltransferase activity"/>
    <property type="evidence" value="ECO:0007669"/>
    <property type="project" value="UniProtKB-UniRule"/>
</dbReference>
<dbReference type="GO" id="GO:0006207">
    <property type="term" value="P:'de novo' pyrimidine nucleobase biosynthetic process"/>
    <property type="evidence" value="ECO:0007669"/>
    <property type="project" value="InterPro"/>
</dbReference>
<dbReference type="GO" id="GO:0044205">
    <property type="term" value="P:'de novo' UMP biosynthetic process"/>
    <property type="evidence" value="ECO:0007669"/>
    <property type="project" value="UniProtKB-UniRule"/>
</dbReference>
<dbReference type="GO" id="GO:0006520">
    <property type="term" value="P:amino acid metabolic process"/>
    <property type="evidence" value="ECO:0007669"/>
    <property type="project" value="InterPro"/>
</dbReference>
<dbReference type="FunFam" id="3.40.50.1370:FF:000007">
    <property type="entry name" value="Aspartate carbamoyltransferase"/>
    <property type="match status" value="1"/>
</dbReference>
<dbReference type="Gene3D" id="3.40.50.1370">
    <property type="entry name" value="Aspartate/ornithine carbamoyltransferase"/>
    <property type="match status" value="2"/>
</dbReference>
<dbReference type="HAMAP" id="MF_00001">
    <property type="entry name" value="Asp_carb_tr"/>
    <property type="match status" value="1"/>
</dbReference>
<dbReference type="InterPro" id="IPR006132">
    <property type="entry name" value="Asp/Orn_carbamoyltranf_P-bd"/>
</dbReference>
<dbReference type="InterPro" id="IPR006130">
    <property type="entry name" value="Asp/Orn_carbamoylTrfase"/>
</dbReference>
<dbReference type="InterPro" id="IPR036901">
    <property type="entry name" value="Asp/Orn_carbamoylTrfase_sf"/>
</dbReference>
<dbReference type="InterPro" id="IPR002082">
    <property type="entry name" value="Asp_carbamoyltransf"/>
</dbReference>
<dbReference type="InterPro" id="IPR006131">
    <property type="entry name" value="Asp_carbamoyltransf_Asp/Orn-bd"/>
</dbReference>
<dbReference type="NCBIfam" id="TIGR00670">
    <property type="entry name" value="asp_carb_tr"/>
    <property type="match status" value="1"/>
</dbReference>
<dbReference type="NCBIfam" id="NF002032">
    <property type="entry name" value="PRK00856.1"/>
    <property type="match status" value="1"/>
</dbReference>
<dbReference type="PANTHER" id="PTHR45753:SF6">
    <property type="entry name" value="ASPARTATE CARBAMOYLTRANSFERASE"/>
    <property type="match status" value="1"/>
</dbReference>
<dbReference type="PANTHER" id="PTHR45753">
    <property type="entry name" value="ORNITHINE CARBAMOYLTRANSFERASE, MITOCHONDRIAL"/>
    <property type="match status" value="1"/>
</dbReference>
<dbReference type="Pfam" id="PF00185">
    <property type="entry name" value="OTCace"/>
    <property type="match status" value="1"/>
</dbReference>
<dbReference type="Pfam" id="PF02729">
    <property type="entry name" value="OTCace_N"/>
    <property type="match status" value="1"/>
</dbReference>
<dbReference type="PRINTS" id="PR00100">
    <property type="entry name" value="AOTCASE"/>
</dbReference>
<dbReference type="PRINTS" id="PR00101">
    <property type="entry name" value="ATCASE"/>
</dbReference>
<dbReference type="SUPFAM" id="SSF53671">
    <property type="entry name" value="Aspartate/ornithine carbamoyltransferase"/>
    <property type="match status" value="1"/>
</dbReference>
<dbReference type="PROSITE" id="PS00097">
    <property type="entry name" value="CARBAMOYLTRANSFERASE"/>
    <property type="match status" value="1"/>
</dbReference>
<organism>
    <name type="scientific">Acinetobacter baumannii (strain SDF)</name>
    <dbReference type="NCBI Taxonomy" id="509170"/>
    <lineage>
        <taxon>Bacteria</taxon>
        <taxon>Pseudomonadati</taxon>
        <taxon>Pseudomonadota</taxon>
        <taxon>Gammaproteobacteria</taxon>
        <taxon>Moraxellales</taxon>
        <taxon>Moraxellaceae</taxon>
        <taxon>Acinetobacter</taxon>
        <taxon>Acinetobacter calcoaceticus/baumannii complex</taxon>
    </lineage>
</organism>